<organism>
    <name type="scientific">Xanthomonas euvesicatoria pv. vesicatoria (strain 85-10)</name>
    <name type="common">Xanthomonas campestris pv. vesicatoria</name>
    <dbReference type="NCBI Taxonomy" id="316273"/>
    <lineage>
        <taxon>Bacteria</taxon>
        <taxon>Pseudomonadati</taxon>
        <taxon>Pseudomonadota</taxon>
        <taxon>Gammaproteobacteria</taxon>
        <taxon>Lysobacterales</taxon>
        <taxon>Lysobacteraceae</taxon>
        <taxon>Xanthomonas</taxon>
    </lineage>
</organism>
<feature type="chain" id="PRO_0000244188" description="Ribosome maturation factor RimM">
    <location>
        <begin position="1"/>
        <end position="180"/>
    </location>
</feature>
<feature type="domain" description="PRC barrel" evidence="1">
    <location>
        <begin position="108"/>
        <end position="180"/>
    </location>
</feature>
<sequence length="180" mass="20206">MLPPGLESTQMKQTERRILLGRIVGAFGVKGELKLESWTEPRTAIFRYQPWIVRAPSGQESVVSGVRGRDQGKNLIAVFPGVTDRDTVEAMHGTEIYVARSALPPPKPDEYYWVDLEELQVETVEGVKLGTVSHLFSTGSNDVVVVRGDRERMIPFVFPDFVKSVDFDANLIVVDWDPDF</sequence>
<accession>Q3BVY9</accession>
<evidence type="ECO:0000255" key="1">
    <source>
        <dbReference type="HAMAP-Rule" id="MF_00014"/>
    </source>
</evidence>
<keyword id="KW-0143">Chaperone</keyword>
<keyword id="KW-0963">Cytoplasm</keyword>
<keyword id="KW-0690">Ribosome biogenesis</keyword>
<keyword id="KW-0698">rRNA processing</keyword>
<comment type="function">
    <text evidence="1">An accessory protein needed during the final step in the assembly of 30S ribosomal subunit, possibly for assembly of the head region. Essential for efficient processing of 16S rRNA. May be needed both before and after RbfA during the maturation of 16S rRNA. It has affinity for free ribosomal 30S subunits but not for 70S ribosomes.</text>
</comment>
<comment type="subunit">
    <text evidence="1">Binds ribosomal protein uS19.</text>
</comment>
<comment type="subcellular location">
    <subcellularLocation>
        <location evidence="1">Cytoplasm</location>
    </subcellularLocation>
</comment>
<comment type="domain">
    <text evidence="1">The PRC barrel domain binds ribosomal protein uS19.</text>
</comment>
<comment type="similarity">
    <text evidence="1">Belongs to the RimM family.</text>
</comment>
<reference key="1">
    <citation type="journal article" date="2005" name="J. Bacteriol.">
        <title>Insights into genome plasticity and pathogenicity of the plant pathogenic Bacterium Xanthomonas campestris pv. vesicatoria revealed by the complete genome sequence.</title>
        <authorList>
            <person name="Thieme F."/>
            <person name="Koebnik R."/>
            <person name="Bekel T."/>
            <person name="Berger C."/>
            <person name="Boch J."/>
            <person name="Buettner D."/>
            <person name="Caldana C."/>
            <person name="Gaigalat L."/>
            <person name="Goesmann A."/>
            <person name="Kay S."/>
            <person name="Kirchner O."/>
            <person name="Lanz C."/>
            <person name="Linke B."/>
            <person name="McHardy A.C."/>
            <person name="Meyer F."/>
            <person name="Mittenhuber G."/>
            <person name="Nies D.H."/>
            <person name="Niesbach-Kloesgen U."/>
            <person name="Patschkowski T."/>
            <person name="Rueckert C."/>
            <person name="Rupp O."/>
            <person name="Schneiker S."/>
            <person name="Schuster S.C."/>
            <person name="Vorhoelter F.J."/>
            <person name="Weber E."/>
            <person name="Puehler A."/>
            <person name="Bonas U."/>
            <person name="Bartels D."/>
            <person name="Kaiser O."/>
        </authorList>
    </citation>
    <scope>NUCLEOTIDE SEQUENCE [LARGE SCALE GENOMIC DNA]</scope>
    <source>
        <strain>85-10</strain>
    </source>
</reference>
<gene>
    <name evidence="1" type="primary">rimM</name>
    <name type="ordered locus">XCV1343</name>
</gene>
<name>RIMM_XANE5</name>
<dbReference type="EMBL" id="AM039952">
    <property type="protein sequence ID" value="CAJ22974.1"/>
    <property type="molecule type" value="Genomic_DNA"/>
</dbReference>
<dbReference type="SMR" id="Q3BVY9"/>
<dbReference type="STRING" id="456327.BJD11_15970"/>
<dbReference type="KEGG" id="xcv:XCV1343"/>
<dbReference type="eggNOG" id="COG0806">
    <property type="taxonomic scope" value="Bacteria"/>
</dbReference>
<dbReference type="HOGENOM" id="CLU_077636_1_0_6"/>
<dbReference type="Proteomes" id="UP000007069">
    <property type="component" value="Chromosome"/>
</dbReference>
<dbReference type="GO" id="GO:0005737">
    <property type="term" value="C:cytoplasm"/>
    <property type="evidence" value="ECO:0007669"/>
    <property type="project" value="UniProtKB-SubCell"/>
</dbReference>
<dbReference type="GO" id="GO:0005840">
    <property type="term" value="C:ribosome"/>
    <property type="evidence" value="ECO:0007669"/>
    <property type="project" value="InterPro"/>
</dbReference>
<dbReference type="GO" id="GO:0043022">
    <property type="term" value="F:ribosome binding"/>
    <property type="evidence" value="ECO:0007669"/>
    <property type="project" value="InterPro"/>
</dbReference>
<dbReference type="GO" id="GO:0042274">
    <property type="term" value="P:ribosomal small subunit biogenesis"/>
    <property type="evidence" value="ECO:0007669"/>
    <property type="project" value="UniProtKB-UniRule"/>
</dbReference>
<dbReference type="GO" id="GO:0006364">
    <property type="term" value="P:rRNA processing"/>
    <property type="evidence" value="ECO:0007669"/>
    <property type="project" value="UniProtKB-UniRule"/>
</dbReference>
<dbReference type="Gene3D" id="2.30.30.240">
    <property type="entry name" value="PRC-barrel domain"/>
    <property type="match status" value="1"/>
</dbReference>
<dbReference type="Gene3D" id="2.40.30.60">
    <property type="entry name" value="RimM"/>
    <property type="match status" value="1"/>
</dbReference>
<dbReference type="HAMAP" id="MF_00014">
    <property type="entry name" value="Ribosome_mat_RimM"/>
    <property type="match status" value="1"/>
</dbReference>
<dbReference type="InterPro" id="IPR011033">
    <property type="entry name" value="PRC_barrel-like_sf"/>
</dbReference>
<dbReference type="InterPro" id="IPR056792">
    <property type="entry name" value="PRC_RimM"/>
</dbReference>
<dbReference type="InterPro" id="IPR011961">
    <property type="entry name" value="RimM"/>
</dbReference>
<dbReference type="InterPro" id="IPR002676">
    <property type="entry name" value="RimM_N"/>
</dbReference>
<dbReference type="InterPro" id="IPR036976">
    <property type="entry name" value="RimM_N_sf"/>
</dbReference>
<dbReference type="InterPro" id="IPR009000">
    <property type="entry name" value="Transl_B-barrel_sf"/>
</dbReference>
<dbReference type="NCBIfam" id="TIGR02273">
    <property type="entry name" value="16S_RimM"/>
    <property type="match status" value="1"/>
</dbReference>
<dbReference type="PANTHER" id="PTHR33692">
    <property type="entry name" value="RIBOSOME MATURATION FACTOR RIMM"/>
    <property type="match status" value="1"/>
</dbReference>
<dbReference type="PANTHER" id="PTHR33692:SF1">
    <property type="entry name" value="RIBOSOME MATURATION FACTOR RIMM"/>
    <property type="match status" value="1"/>
</dbReference>
<dbReference type="Pfam" id="PF24986">
    <property type="entry name" value="PRC_RimM"/>
    <property type="match status" value="1"/>
</dbReference>
<dbReference type="Pfam" id="PF01782">
    <property type="entry name" value="RimM"/>
    <property type="match status" value="1"/>
</dbReference>
<dbReference type="SUPFAM" id="SSF50346">
    <property type="entry name" value="PRC-barrel domain"/>
    <property type="match status" value="1"/>
</dbReference>
<dbReference type="SUPFAM" id="SSF50447">
    <property type="entry name" value="Translation proteins"/>
    <property type="match status" value="1"/>
</dbReference>
<protein>
    <recommendedName>
        <fullName evidence="1">Ribosome maturation factor RimM</fullName>
    </recommendedName>
</protein>
<proteinExistence type="inferred from homology"/>